<reference key="1">
    <citation type="journal article" date="2003" name="Proc. Natl. Acad. Sci. U.S.A.">
        <title>Reductive genome evolution in Buchnera aphidicola.</title>
        <authorList>
            <person name="van Ham R.C.H.J."/>
            <person name="Kamerbeek J."/>
            <person name="Palacios C."/>
            <person name="Rausell C."/>
            <person name="Abascal F."/>
            <person name="Bastolla U."/>
            <person name="Fernandez J.M."/>
            <person name="Jimenez L."/>
            <person name="Postigo M."/>
            <person name="Silva F.J."/>
            <person name="Tamames J."/>
            <person name="Viguera E."/>
            <person name="Latorre A."/>
            <person name="Valencia A."/>
            <person name="Moran F."/>
            <person name="Moya A."/>
        </authorList>
    </citation>
    <scope>NUCLEOTIDE SEQUENCE [LARGE SCALE GENOMIC DNA]</scope>
    <source>
        <strain>Bp</strain>
    </source>
</reference>
<protein>
    <recommendedName>
        <fullName evidence="2">Transaldolase</fullName>
        <ecNumber evidence="2">2.2.1.2</ecNumber>
    </recommendedName>
</protein>
<sequence length="316" mass="36130">MNQLECLKKYTDIVVDSGDLVSINKFKLGDVTTNPSLIRQVMSLQKYQYIIYDSIRYAKKKGGSHKFKLENAIDKVSVILGSEILKNISGKISTEIDSRLSFNTNLCIERAKKLISMYEEHDIHRDRVLIKLAATWESVSAAKELKKENIQSNLTLLFSFAQAKICAEAGVFLISPFVGRIYDWYKSKSLIKSAMIDDDPGVNAVRKIYQYYKEYGYHTIIMGASFRNVDQVLALSGCDRLTISPNLLHKLQLSDDLVIRKLIPPKHKKLQPVCMSKSEFCWFHNEDAMAVEKLSEGIRQFGKDQQELENIINNNF</sequence>
<organism>
    <name type="scientific">Buchnera aphidicola subsp. Baizongia pistaciae (strain Bp)</name>
    <dbReference type="NCBI Taxonomy" id="224915"/>
    <lineage>
        <taxon>Bacteria</taxon>
        <taxon>Pseudomonadati</taxon>
        <taxon>Pseudomonadota</taxon>
        <taxon>Gammaproteobacteria</taxon>
        <taxon>Enterobacterales</taxon>
        <taxon>Erwiniaceae</taxon>
        <taxon>Buchnera</taxon>
    </lineage>
</organism>
<accession>Q89AY3</accession>
<keyword id="KW-0963">Cytoplasm</keyword>
<keyword id="KW-0570">Pentose shunt</keyword>
<keyword id="KW-1185">Reference proteome</keyword>
<keyword id="KW-0704">Schiff base</keyword>
<keyword id="KW-0808">Transferase</keyword>
<name>TAL_BUCBP</name>
<feature type="chain" id="PRO_0000173584" description="Transaldolase">
    <location>
        <begin position="1"/>
        <end position="316"/>
    </location>
</feature>
<feature type="active site" description="Schiff-base intermediate with substrate" evidence="2">
    <location>
        <position position="131"/>
    </location>
</feature>
<comment type="function">
    <text evidence="2">Transaldolase is important for the balance of metabolites in the pentose-phosphate pathway.</text>
</comment>
<comment type="catalytic activity">
    <reaction evidence="2">
        <text>D-sedoheptulose 7-phosphate + D-glyceraldehyde 3-phosphate = D-erythrose 4-phosphate + beta-D-fructose 6-phosphate</text>
        <dbReference type="Rhea" id="RHEA:17053"/>
        <dbReference type="ChEBI" id="CHEBI:16897"/>
        <dbReference type="ChEBI" id="CHEBI:57483"/>
        <dbReference type="ChEBI" id="CHEBI:57634"/>
        <dbReference type="ChEBI" id="CHEBI:59776"/>
        <dbReference type="EC" id="2.2.1.2"/>
    </reaction>
</comment>
<comment type="pathway">
    <text evidence="2">Carbohydrate degradation; pentose phosphate pathway; D-glyceraldehyde 3-phosphate and beta-D-fructose 6-phosphate from D-ribose 5-phosphate and D-xylulose 5-phosphate (non-oxidative stage): step 2/3.</text>
</comment>
<comment type="subunit">
    <text evidence="1">Homodimer.</text>
</comment>
<comment type="subcellular location">
    <subcellularLocation>
        <location evidence="2">Cytoplasm</location>
    </subcellularLocation>
</comment>
<comment type="similarity">
    <text evidence="2">Belongs to the transaldolase family. Type 1 subfamily.</text>
</comment>
<dbReference type="EC" id="2.2.1.2" evidence="2"/>
<dbReference type="EMBL" id="AE016826">
    <property type="protein sequence ID" value="AAO26822.1"/>
    <property type="molecule type" value="Genomic_DNA"/>
</dbReference>
<dbReference type="RefSeq" id="WP_011091223.1">
    <property type="nucleotide sequence ID" value="NC_004545.1"/>
</dbReference>
<dbReference type="SMR" id="Q89AY3"/>
<dbReference type="STRING" id="224915.bbp_087"/>
<dbReference type="KEGG" id="bab:bbp_087"/>
<dbReference type="eggNOG" id="COG0176">
    <property type="taxonomic scope" value="Bacteria"/>
</dbReference>
<dbReference type="HOGENOM" id="CLU_047470_0_1_6"/>
<dbReference type="OrthoDB" id="9809101at2"/>
<dbReference type="UniPathway" id="UPA00115">
    <property type="reaction ID" value="UER00414"/>
</dbReference>
<dbReference type="Proteomes" id="UP000000601">
    <property type="component" value="Chromosome"/>
</dbReference>
<dbReference type="GO" id="GO:0005829">
    <property type="term" value="C:cytosol"/>
    <property type="evidence" value="ECO:0007669"/>
    <property type="project" value="TreeGrafter"/>
</dbReference>
<dbReference type="GO" id="GO:0004801">
    <property type="term" value="F:transaldolase activity"/>
    <property type="evidence" value="ECO:0000250"/>
    <property type="project" value="UniProtKB"/>
</dbReference>
<dbReference type="GO" id="GO:0005975">
    <property type="term" value="P:carbohydrate metabolic process"/>
    <property type="evidence" value="ECO:0007669"/>
    <property type="project" value="InterPro"/>
</dbReference>
<dbReference type="GO" id="GO:0006098">
    <property type="term" value="P:pentose-phosphate shunt"/>
    <property type="evidence" value="ECO:0007669"/>
    <property type="project" value="UniProtKB-UniRule"/>
</dbReference>
<dbReference type="CDD" id="cd00957">
    <property type="entry name" value="Transaldolase_TalAB"/>
    <property type="match status" value="1"/>
</dbReference>
<dbReference type="FunFam" id="3.20.20.70:FF:000131">
    <property type="entry name" value="Transaldolase"/>
    <property type="match status" value="1"/>
</dbReference>
<dbReference type="Gene3D" id="3.20.20.70">
    <property type="entry name" value="Aldolase class I"/>
    <property type="match status" value="1"/>
</dbReference>
<dbReference type="HAMAP" id="MF_00492">
    <property type="entry name" value="Transaldolase_1"/>
    <property type="match status" value="1"/>
</dbReference>
<dbReference type="InterPro" id="IPR013785">
    <property type="entry name" value="Aldolase_TIM"/>
</dbReference>
<dbReference type="InterPro" id="IPR001585">
    <property type="entry name" value="TAL/FSA"/>
</dbReference>
<dbReference type="InterPro" id="IPR004730">
    <property type="entry name" value="Transaldolase_1"/>
</dbReference>
<dbReference type="InterPro" id="IPR018225">
    <property type="entry name" value="Transaldolase_AS"/>
</dbReference>
<dbReference type="NCBIfam" id="NF009001">
    <property type="entry name" value="PRK12346.1"/>
    <property type="match status" value="1"/>
</dbReference>
<dbReference type="NCBIfam" id="TIGR00874">
    <property type="entry name" value="talAB"/>
    <property type="match status" value="1"/>
</dbReference>
<dbReference type="PANTHER" id="PTHR10683">
    <property type="entry name" value="TRANSALDOLASE"/>
    <property type="match status" value="1"/>
</dbReference>
<dbReference type="PANTHER" id="PTHR10683:SF16">
    <property type="entry name" value="TRANSALDOLASE A"/>
    <property type="match status" value="1"/>
</dbReference>
<dbReference type="Pfam" id="PF00923">
    <property type="entry name" value="TAL_FSA"/>
    <property type="match status" value="1"/>
</dbReference>
<dbReference type="SUPFAM" id="SSF51569">
    <property type="entry name" value="Aldolase"/>
    <property type="match status" value="1"/>
</dbReference>
<dbReference type="PROSITE" id="PS01054">
    <property type="entry name" value="TRANSALDOLASE_1"/>
    <property type="match status" value="1"/>
</dbReference>
<gene>
    <name evidence="2" type="primary">tal</name>
    <name type="synonym">talA</name>
    <name type="ordered locus">bbp_087</name>
</gene>
<proteinExistence type="inferred from homology"/>
<evidence type="ECO:0000250" key="1"/>
<evidence type="ECO:0000255" key="2">
    <source>
        <dbReference type="HAMAP-Rule" id="MF_00492"/>
    </source>
</evidence>